<reference key="1">
    <citation type="journal article" date="2003" name="Mol. Microbiol.">
        <title>Genome-based analysis of virulence genes in a non-biofilm-forming Staphylococcus epidermidis strain (ATCC 12228).</title>
        <authorList>
            <person name="Zhang Y.-Q."/>
            <person name="Ren S.-X."/>
            <person name="Li H.-L."/>
            <person name="Wang Y.-X."/>
            <person name="Fu G."/>
            <person name="Yang J."/>
            <person name="Qin Z.-Q."/>
            <person name="Miao Y.-G."/>
            <person name="Wang W.-Y."/>
            <person name="Chen R.-S."/>
            <person name="Shen Y."/>
            <person name="Chen Z."/>
            <person name="Yuan Z.-H."/>
            <person name="Zhao G.-P."/>
            <person name="Qu D."/>
            <person name="Danchin A."/>
            <person name="Wen Y.-M."/>
        </authorList>
    </citation>
    <scope>NUCLEOTIDE SEQUENCE [LARGE SCALE GENOMIC DNA]</scope>
    <source>
        <strain>ATCC 12228 / FDA PCI 1200</strain>
    </source>
</reference>
<sequence length="395" mass="44701">MKKKLSYMITIMLAFTLSLALGLFFNSAHADSLPQKNGANQKTTKVTVSNKDVPDAVRKLAEEQYLSRVALLDKASNHKATSYTLGEPFKIYKFNKESDGNYYYPVLNKKGDVVYVVTISPNPSNSKASKQQNNYSINVSPFLSKILNQYKNQKITILTNTKGYFALTEDGKVTLVLKTPRNNEKTYENATESTKPKDLNDFKQTASVTKPTLEYQSTRNEMYAEYVNQLKNFRIRETQGYNSWCAGYTMSALLNATYNTNRYNAESVMRYLHPNLRGHDFQFTGLTSNEMLRFGRSQGRNTQYLNRMTSYNEVDQLTTNNQGIAVLGKRVESSDGIHAGHAMAVAGNAKVNNGQKVILIWNPWDNGLMTQDAHSNIIPVSNGDHYEWYASIYGY</sequence>
<keyword id="KW-0134">Cell wall</keyword>
<keyword id="KW-0378">Hydrolase</keyword>
<keyword id="KW-0645">Protease</keyword>
<keyword id="KW-0964">Secreted</keyword>
<keyword id="KW-0732">Signal</keyword>
<keyword id="KW-0788">Thiol protease</keyword>
<keyword id="KW-0843">Virulence</keyword>
<keyword id="KW-0865">Zymogen</keyword>
<comment type="function">
    <text evidence="1">Cysteine protease able to cleave elastin, insulin, myoglobin, fibronectin, fibrinogen, HMW-kininogen, alpha-1-protease inhibitor and alpha-1-antitrypsin. Along with other extracellular proteases may contribute to the colonization and infection of human tissues (By similarity).</text>
</comment>
<comment type="subcellular location">
    <subcellularLocation>
        <location>Secreted</location>
        <location>Cell wall</location>
    </subcellularLocation>
    <subcellularLocation>
        <location evidence="1">Secreted</location>
    </subcellularLocation>
</comment>
<comment type="PTM">
    <text evidence="1">Proteolytically cleaved.</text>
</comment>
<comment type="similarity">
    <text evidence="4">Belongs to the peptidase C47 family.</text>
</comment>
<protein>
    <recommendedName>
        <fullName>Extracellular cysteine protease</fullName>
        <ecNumber>3.4.22.-</ecNumber>
    </recommendedName>
    <alternativeName>
        <fullName>Staphopain</fullName>
    </alternativeName>
</protein>
<gene>
    <name type="primary">ecpA</name>
    <name type="synonym">ecp</name>
    <name type="ordered locus">SE_0184</name>
</gene>
<name>ECPA_STAES</name>
<organism>
    <name type="scientific">Staphylococcus epidermidis (strain ATCC 12228 / FDA PCI 1200)</name>
    <dbReference type="NCBI Taxonomy" id="176280"/>
    <lineage>
        <taxon>Bacteria</taxon>
        <taxon>Bacillati</taxon>
        <taxon>Bacillota</taxon>
        <taxon>Bacilli</taxon>
        <taxon>Bacillales</taxon>
        <taxon>Staphylococcaceae</taxon>
        <taxon>Staphylococcus</taxon>
    </lineage>
</organism>
<evidence type="ECO:0000250" key="1"/>
<evidence type="ECO:0000255" key="2"/>
<evidence type="ECO:0000255" key="3">
    <source>
        <dbReference type="PROSITE-ProRule" id="PRU10089"/>
    </source>
</evidence>
<evidence type="ECO:0000305" key="4"/>
<accession>P0C0Q0</accession>
<accession>Q8CMM9</accession>
<accession>Q9EWC9</accession>
<dbReference type="EC" id="3.4.22.-"/>
<dbReference type="EMBL" id="AE015929">
    <property type="protein sequence ID" value="AAO03781.1"/>
    <property type="molecule type" value="Genomic_DNA"/>
</dbReference>
<dbReference type="RefSeq" id="NP_763739.1">
    <property type="nucleotide sequence ID" value="NC_004461.1"/>
</dbReference>
<dbReference type="RefSeq" id="WP_002437704.1">
    <property type="nucleotide sequence ID" value="NZ_WBME01000051.1"/>
</dbReference>
<dbReference type="SMR" id="P0C0Q0"/>
<dbReference type="MEROPS" id="C47.003"/>
<dbReference type="KEGG" id="sep:SE_0184"/>
<dbReference type="PATRIC" id="fig|176280.10.peg.167"/>
<dbReference type="eggNOG" id="ENOG502ZWEC">
    <property type="taxonomic scope" value="Bacteria"/>
</dbReference>
<dbReference type="HOGENOM" id="CLU_069043_0_0_9"/>
<dbReference type="OrthoDB" id="2398168at2"/>
<dbReference type="Proteomes" id="UP000001411">
    <property type="component" value="Chromosome"/>
</dbReference>
<dbReference type="GO" id="GO:0005576">
    <property type="term" value="C:extracellular region"/>
    <property type="evidence" value="ECO:0007669"/>
    <property type="project" value="UniProtKB-SubCell"/>
</dbReference>
<dbReference type="GO" id="GO:0008234">
    <property type="term" value="F:cysteine-type peptidase activity"/>
    <property type="evidence" value="ECO:0007669"/>
    <property type="project" value="UniProtKB-KW"/>
</dbReference>
<dbReference type="GO" id="GO:0006508">
    <property type="term" value="P:proteolysis"/>
    <property type="evidence" value="ECO:0007669"/>
    <property type="project" value="UniProtKB-KW"/>
</dbReference>
<dbReference type="Gene3D" id="3.90.70.10">
    <property type="entry name" value="Cysteine proteinases"/>
    <property type="match status" value="1"/>
</dbReference>
<dbReference type="Gene3D" id="3.10.500.10">
    <property type="entry name" value="Staphopain proregion domain"/>
    <property type="match status" value="1"/>
</dbReference>
<dbReference type="InterPro" id="IPR046350">
    <property type="entry name" value="Cystatin_sf"/>
</dbReference>
<dbReference type="InterPro" id="IPR038765">
    <property type="entry name" value="Papain-like_cys_pep_sf"/>
</dbReference>
<dbReference type="InterPro" id="IPR025660">
    <property type="entry name" value="Pept_his_AS"/>
</dbReference>
<dbReference type="InterPro" id="IPR008750">
    <property type="entry name" value="Peptidase_C47"/>
</dbReference>
<dbReference type="InterPro" id="IPR028076">
    <property type="entry name" value="Staphopain_pro"/>
</dbReference>
<dbReference type="InterPro" id="IPR037155">
    <property type="entry name" value="Staphopain_pro_sf"/>
</dbReference>
<dbReference type="Pfam" id="PF05543">
    <property type="entry name" value="Peptidase_C47"/>
    <property type="match status" value="1"/>
</dbReference>
<dbReference type="Pfam" id="PF14731">
    <property type="entry name" value="Staphopain_pro"/>
    <property type="match status" value="1"/>
</dbReference>
<dbReference type="SUPFAM" id="SSF54403">
    <property type="entry name" value="Cystatin/monellin"/>
    <property type="match status" value="1"/>
</dbReference>
<dbReference type="SUPFAM" id="SSF54001">
    <property type="entry name" value="Cysteine proteinases"/>
    <property type="match status" value="1"/>
</dbReference>
<dbReference type="PROSITE" id="PS00639">
    <property type="entry name" value="THIOL_PROTEASE_HIS"/>
    <property type="match status" value="1"/>
</dbReference>
<proteinExistence type="inferred from homology"/>
<feature type="signal peptide" evidence="2">
    <location>
        <begin position="1"/>
        <end position="30"/>
    </location>
</feature>
<feature type="propeptide" id="PRO_0000026573" evidence="1">
    <location>
        <begin position="31"/>
        <end position="221"/>
    </location>
</feature>
<feature type="chain" id="PRO_0000026574" description="Extracellular cysteine protease">
    <location>
        <begin position="222"/>
        <end position="395"/>
    </location>
</feature>
<feature type="active site" evidence="3">
    <location>
        <position position="245"/>
    </location>
</feature>
<feature type="active site" evidence="3">
    <location>
        <position position="341"/>
    </location>
</feature>
<feature type="active site" evidence="3">
    <location>
        <position position="362"/>
    </location>
</feature>
<feature type="site" description="Cleavage" evidence="1">
    <location>
        <begin position="221"/>
        <end position="222"/>
    </location>
</feature>